<reference key="1">
    <citation type="submission" date="2004-11" db="EMBL/GenBank/DDBJ databases">
        <authorList>
            <consortium name="The German cDNA consortium"/>
        </authorList>
    </citation>
    <scope>NUCLEOTIDE SEQUENCE [LARGE SCALE MRNA]</scope>
    <source>
        <tissue>Kidney</tissue>
    </source>
</reference>
<sequence length="236" mass="26670">MALVPYEETTEFGLQKFHKPLKTFSFANHTIQIRQDWRHLGVAAVVWDAAIVLSTYLEMGAVELRGRSAVELGAGTGLVGIVAALLALKSSMKPLLVHCLLFFSGAHVTITDRKVALEFLKSNVQANLPPHIQPKTVVKELTWGQNLGSFSPGEFDLILGADIIYLEETFTDLLQTLEHLCSNHSVILLACRIRYERDNNFLAMLERQFTVRKVHYDPEKDVHIYEAQKRNQKEDL</sequence>
<comment type="function">
    <text evidence="1">Protein-lysine methyltransferase that selectively trimethylates residues in heat shock protein 70 (HSP70) family members. Contributes to the in vivo trimethylation of Lys residues in HSPA1 and HSPA8. In vitro methylates 'Lys-561' in HSPA1, 'Lys-564' in HSPA2, 'Lys-585' in HSPA5, 'Lys-563' in HSPA6 and 'Lys-561' in HSPA8.</text>
</comment>
<comment type="catalytic activity">
    <reaction evidence="1">
        <text>L-lysyl-[protein] + 3 S-adenosyl-L-methionine = N(6),N(6),N(6)-trimethyl-L-lysyl-[protein] + 3 S-adenosyl-L-homocysteine + 3 H(+)</text>
        <dbReference type="Rhea" id="RHEA:54192"/>
        <dbReference type="Rhea" id="RHEA-COMP:9752"/>
        <dbReference type="Rhea" id="RHEA-COMP:13826"/>
        <dbReference type="ChEBI" id="CHEBI:15378"/>
        <dbReference type="ChEBI" id="CHEBI:29969"/>
        <dbReference type="ChEBI" id="CHEBI:57856"/>
        <dbReference type="ChEBI" id="CHEBI:59789"/>
        <dbReference type="ChEBI" id="CHEBI:61961"/>
    </reaction>
    <physiologicalReaction direction="left-to-right" evidence="1">
        <dbReference type="Rhea" id="RHEA:54193"/>
    </physiologicalReaction>
</comment>
<comment type="subunit">
    <text evidence="1">Interacts with heat shock 70 family members; at least some of these proteins are methylation substrates.</text>
</comment>
<comment type="subcellular location">
    <subcellularLocation>
        <location evidence="1">Cytoplasm</location>
    </subcellularLocation>
</comment>
<comment type="similarity">
    <text evidence="2">Belongs to the methyltransferase superfamily. METTL21 family.</text>
</comment>
<gene>
    <name type="primary">METTL21A</name>
    <name type="synonym">FAM119A</name>
</gene>
<name>MT21A_PONAB</name>
<protein>
    <recommendedName>
        <fullName>Protein N-lysine methyltransferase METTL21A</fullName>
        <ecNumber evidence="1">2.1.1.-</ecNumber>
    </recommendedName>
    <alternativeName>
        <fullName>Methyltransferase-like protein 21A</fullName>
    </alternativeName>
</protein>
<proteinExistence type="evidence at transcript level"/>
<evidence type="ECO:0000250" key="1">
    <source>
        <dbReference type="UniProtKB" id="Q8WXB1"/>
    </source>
</evidence>
<evidence type="ECO:0000305" key="2"/>
<organism>
    <name type="scientific">Pongo abelii</name>
    <name type="common">Sumatran orangutan</name>
    <name type="synonym">Pongo pygmaeus abelii</name>
    <dbReference type="NCBI Taxonomy" id="9601"/>
    <lineage>
        <taxon>Eukaryota</taxon>
        <taxon>Metazoa</taxon>
        <taxon>Chordata</taxon>
        <taxon>Craniata</taxon>
        <taxon>Vertebrata</taxon>
        <taxon>Euteleostomi</taxon>
        <taxon>Mammalia</taxon>
        <taxon>Eutheria</taxon>
        <taxon>Euarchontoglires</taxon>
        <taxon>Primates</taxon>
        <taxon>Haplorrhini</taxon>
        <taxon>Catarrhini</taxon>
        <taxon>Hominidae</taxon>
        <taxon>Pongo</taxon>
    </lineage>
</organism>
<dbReference type="EC" id="2.1.1.-" evidence="1"/>
<dbReference type="EMBL" id="CR857725">
    <property type="protein sequence ID" value="CAH89993.1"/>
    <property type="molecule type" value="mRNA"/>
</dbReference>
<dbReference type="RefSeq" id="NP_001124945.1">
    <property type="nucleotide sequence ID" value="NM_001131473.1"/>
</dbReference>
<dbReference type="RefSeq" id="XP_009236295.1">
    <property type="nucleotide sequence ID" value="XM_009238020.1"/>
</dbReference>
<dbReference type="RefSeq" id="XP_009236296.1">
    <property type="nucleotide sequence ID" value="XM_009238021.1"/>
</dbReference>
<dbReference type="RefSeq" id="XP_009236297.1">
    <property type="nucleotide sequence ID" value="XM_009238022.1"/>
</dbReference>
<dbReference type="RefSeq" id="XP_009236298.1">
    <property type="nucleotide sequence ID" value="XM_009238023.1"/>
</dbReference>
<dbReference type="RefSeq" id="XP_009236299.1">
    <property type="nucleotide sequence ID" value="XM_009238024.1"/>
</dbReference>
<dbReference type="RefSeq" id="XP_054404508.1">
    <property type="nucleotide sequence ID" value="XM_054548533.2"/>
</dbReference>
<dbReference type="RefSeq" id="XP_054404509.1">
    <property type="nucleotide sequence ID" value="XM_054548534.2"/>
</dbReference>
<dbReference type="RefSeq" id="XP_054404511.1">
    <property type="nucleotide sequence ID" value="XM_054548536.2"/>
</dbReference>
<dbReference type="RefSeq" id="XP_054404512.1">
    <property type="nucleotide sequence ID" value="XM_054548537.2"/>
</dbReference>
<dbReference type="RefSeq" id="XP_054404513.1">
    <property type="nucleotide sequence ID" value="XM_054548538.2"/>
</dbReference>
<dbReference type="RefSeq" id="XP_054404514.1">
    <property type="nucleotide sequence ID" value="XM_054548539.2"/>
</dbReference>
<dbReference type="SMR" id="Q5RE14"/>
<dbReference type="STRING" id="9601.ENSPPYP00000014659"/>
<dbReference type="Ensembl" id="ENSPPYT00000054598.1">
    <property type="protein sequence ID" value="ENSPPYP00000030457.1"/>
    <property type="gene ID" value="ENSPPYG00000013116.3"/>
</dbReference>
<dbReference type="GeneID" id="100171817"/>
<dbReference type="KEGG" id="pon:100171817"/>
<dbReference type="CTD" id="151194"/>
<dbReference type="eggNOG" id="KOG2793">
    <property type="taxonomic scope" value="Eukaryota"/>
</dbReference>
<dbReference type="GeneTree" id="ENSGT00940000157249"/>
<dbReference type="HOGENOM" id="CLU_055721_4_2_1"/>
<dbReference type="InParanoid" id="Q5RE14"/>
<dbReference type="OMA" id="LFWELCD"/>
<dbReference type="OrthoDB" id="413520at2759"/>
<dbReference type="Proteomes" id="UP000001595">
    <property type="component" value="Chromosome 2B"/>
</dbReference>
<dbReference type="GO" id="GO:0005829">
    <property type="term" value="C:cytosol"/>
    <property type="evidence" value="ECO:0007669"/>
    <property type="project" value="TreeGrafter"/>
</dbReference>
<dbReference type="GO" id="GO:0032991">
    <property type="term" value="C:protein-containing complex"/>
    <property type="evidence" value="ECO:0007669"/>
    <property type="project" value="Ensembl"/>
</dbReference>
<dbReference type="GO" id="GO:0051117">
    <property type="term" value="F:ATPase binding"/>
    <property type="evidence" value="ECO:0007669"/>
    <property type="project" value="Ensembl"/>
</dbReference>
<dbReference type="GO" id="GO:0030544">
    <property type="term" value="F:Hsp70 protein binding"/>
    <property type="evidence" value="ECO:0007669"/>
    <property type="project" value="Ensembl"/>
</dbReference>
<dbReference type="GO" id="GO:0016279">
    <property type="term" value="F:protein-lysine N-methyltransferase activity"/>
    <property type="evidence" value="ECO:0000250"/>
    <property type="project" value="UniProtKB"/>
</dbReference>
<dbReference type="GO" id="GO:0006479">
    <property type="term" value="P:protein methylation"/>
    <property type="evidence" value="ECO:0000250"/>
    <property type="project" value="UniProtKB"/>
</dbReference>
<dbReference type="FunFam" id="3.40.50.150:FF:000137">
    <property type="entry name" value="protein N-lysine methyltransferase METTL21A"/>
    <property type="match status" value="1"/>
</dbReference>
<dbReference type="Gene3D" id="3.40.50.150">
    <property type="entry name" value="Vaccinia Virus protein VP39"/>
    <property type="match status" value="1"/>
</dbReference>
<dbReference type="InterPro" id="IPR019410">
    <property type="entry name" value="Methyltransf_16"/>
</dbReference>
<dbReference type="InterPro" id="IPR029063">
    <property type="entry name" value="SAM-dependent_MTases_sf"/>
</dbReference>
<dbReference type="PANTHER" id="PTHR14614">
    <property type="entry name" value="HEPATOCELLULAR CARCINOMA-ASSOCIATED ANTIGEN"/>
    <property type="match status" value="1"/>
</dbReference>
<dbReference type="PANTHER" id="PTHR14614:SF14">
    <property type="entry name" value="PROTEIN N-LYSINE METHYLTRANSFERASE METTL21A"/>
    <property type="match status" value="1"/>
</dbReference>
<dbReference type="Pfam" id="PF10294">
    <property type="entry name" value="Methyltransf_16"/>
    <property type="match status" value="1"/>
</dbReference>
<dbReference type="SUPFAM" id="SSF53335">
    <property type="entry name" value="S-adenosyl-L-methionine-dependent methyltransferases"/>
    <property type="match status" value="1"/>
</dbReference>
<feature type="chain" id="PRO_0000292035" description="Protein N-lysine methyltransferase METTL21A">
    <location>
        <begin position="1"/>
        <end position="236"/>
    </location>
</feature>
<feature type="binding site" evidence="1">
    <location>
        <position position="47"/>
    </location>
    <ligand>
        <name>S-adenosyl-L-methionine</name>
        <dbReference type="ChEBI" id="CHEBI:59789"/>
    </ligand>
</feature>
<feature type="binding site" evidence="1">
    <location>
        <begin position="73"/>
        <end position="75"/>
    </location>
    <ligand>
        <name>S-adenosyl-L-methionine</name>
        <dbReference type="ChEBI" id="CHEBI:59789"/>
    </ligand>
</feature>
<feature type="binding site" evidence="1">
    <location>
        <position position="112"/>
    </location>
    <ligand>
        <name>S-adenosyl-L-methionine</name>
        <dbReference type="ChEBI" id="CHEBI:59789"/>
    </ligand>
</feature>
<feature type="binding site" evidence="1">
    <location>
        <position position="143"/>
    </location>
    <ligand>
        <name>S-adenosyl-L-methionine</name>
        <dbReference type="ChEBI" id="CHEBI:59789"/>
    </ligand>
</feature>
<feature type="binding site" evidence="1">
    <location>
        <position position="161"/>
    </location>
    <ligand>
        <name>S-adenosyl-L-methionine</name>
        <dbReference type="ChEBI" id="CHEBI:59789"/>
    </ligand>
</feature>
<accession>Q5RE14</accession>
<keyword id="KW-0963">Cytoplasm</keyword>
<keyword id="KW-0489">Methyltransferase</keyword>
<keyword id="KW-1185">Reference proteome</keyword>
<keyword id="KW-0949">S-adenosyl-L-methionine</keyword>
<keyword id="KW-0808">Transferase</keyword>